<gene>
    <name evidence="1" type="primary">htpG</name>
    <name type="ordered locus">VV1_0189</name>
</gene>
<dbReference type="EMBL" id="AE016795">
    <property type="protein sequence ID" value="AAO08726.1"/>
    <property type="molecule type" value="Genomic_DNA"/>
</dbReference>
<dbReference type="RefSeq" id="WP_011078304.1">
    <property type="nucleotide sequence ID" value="NC_004459.3"/>
</dbReference>
<dbReference type="SMR" id="Q8DFM0"/>
<dbReference type="KEGG" id="vvu:VV1_0189"/>
<dbReference type="HOGENOM" id="CLU_006684_3_0_6"/>
<dbReference type="Proteomes" id="UP000002275">
    <property type="component" value="Chromosome 1"/>
</dbReference>
<dbReference type="GO" id="GO:0005737">
    <property type="term" value="C:cytoplasm"/>
    <property type="evidence" value="ECO:0007669"/>
    <property type="project" value="UniProtKB-SubCell"/>
</dbReference>
<dbReference type="GO" id="GO:0005524">
    <property type="term" value="F:ATP binding"/>
    <property type="evidence" value="ECO:0007669"/>
    <property type="project" value="UniProtKB-UniRule"/>
</dbReference>
<dbReference type="GO" id="GO:0016887">
    <property type="term" value="F:ATP hydrolysis activity"/>
    <property type="evidence" value="ECO:0007669"/>
    <property type="project" value="InterPro"/>
</dbReference>
<dbReference type="GO" id="GO:0140662">
    <property type="term" value="F:ATP-dependent protein folding chaperone"/>
    <property type="evidence" value="ECO:0007669"/>
    <property type="project" value="InterPro"/>
</dbReference>
<dbReference type="GO" id="GO:0051082">
    <property type="term" value="F:unfolded protein binding"/>
    <property type="evidence" value="ECO:0007669"/>
    <property type="project" value="UniProtKB-UniRule"/>
</dbReference>
<dbReference type="CDD" id="cd16927">
    <property type="entry name" value="HATPase_Hsp90-like"/>
    <property type="match status" value="1"/>
</dbReference>
<dbReference type="FunFam" id="3.30.230.80:FF:000002">
    <property type="entry name" value="Molecular chaperone HtpG"/>
    <property type="match status" value="1"/>
</dbReference>
<dbReference type="FunFam" id="3.30.565.10:FF:000009">
    <property type="entry name" value="Molecular chaperone HtpG"/>
    <property type="match status" value="1"/>
</dbReference>
<dbReference type="FunFam" id="3.40.50.11260:FF:000002">
    <property type="entry name" value="Molecular chaperone HtpG"/>
    <property type="match status" value="1"/>
</dbReference>
<dbReference type="Gene3D" id="3.30.230.80">
    <property type="match status" value="1"/>
</dbReference>
<dbReference type="Gene3D" id="3.40.50.11260">
    <property type="match status" value="1"/>
</dbReference>
<dbReference type="Gene3D" id="1.20.120.790">
    <property type="entry name" value="Heat shock protein 90, C-terminal domain"/>
    <property type="match status" value="1"/>
</dbReference>
<dbReference type="Gene3D" id="3.30.565.10">
    <property type="entry name" value="Histidine kinase-like ATPase, C-terminal domain"/>
    <property type="match status" value="1"/>
</dbReference>
<dbReference type="HAMAP" id="MF_00505">
    <property type="entry name" value="HSP90"/>
    <property type="match status" value="1"/>
</dbReference>
<dbReference type="InterPro" id="IPR036890">
    <property type="entry name" value="HATPase_C_sf"/>
</dbReference>
<dbReference type="InterPro" id="IPR019805">
    <property type="entry name" value="Heat_shock_protein_90_CS"/>
</dbReference>
<dbReference type="InterPro" id="IPR037196">
    <property type="entry name" value="HSP90_C"/>
</dbReference>
<dbReference type="InterPro" id="IPR001404">
    <property type="entry name" value="Hsp90_fam"/>
</dbReference>
<dbReference type="InterPro" id="IPR020575">
    <property type="entry name" value="Hsp90_N"/>
</dbReference>
<dbReference type="InterPro" id="IPR020568">
    <property type="entry name" value="Ribosomal_Su5_D2-typ_SF"/>
</dbReference>
<dbReference type="NCBIfam" id="NF003555">
    <property type="entry name" value="PRK05218.1"/>
    <property type="match status" value="1"/>
</dbReference>
<dbReference type="PANTHER" id="PTHR11528">
    <property type="entry name" value="HEAT SHOCK PROTEIN 90 FAMILY MEMBER"/>
    <property type="match status" value="1"/>
</dbReference>
<dbReference type="Pfam" id="PF13589">
    <property type="entry name" value="HATPase_c_3"/>
    <property type="match status" value="1"/>
</dbReference>
<dbReference type="Pfam" id="PF00183">
    <property type="entry name" value="HSP90"/>
    <property type="match status" value="1"/>
</dbReference>
<dbReference type="PIRSF" id="PIRSF002583">
    <property type="entry name" value="Hsp90"/>
    <property type="match status" value="1"/>
</dbReference>
<dbReference type="PRINTS" id="PR00775">
    <property type="entry name" value="HEATSHOCK90"/>
</dbReference>
<dbReference type="SMART" id="SM00387">
    <property type="entry name" value="HATPase_c"/>
    <property type="match status" value="1"/>
</dbReference>
<dbReference type="SUPFAM" id="SSF55874">
    <property type="entry name" value="ATPase domain of HSP90 chaperone/DNA topoisomerase II/histidine kinase"/>
    <property type="match status" value="1"/>
</dbReference>
<dbReference type="SUPFAM" id="SSF110942">
    <property type="entry name" value="HSP90 C-terminal domain"/>
    <property type="match status" value="1"/>
</dbReference>
<dbReference type="SUPFAM" id="SSF54211">
    <property type="entry name" value="Ribosomal protein S5 domain 2-like"/>
    <property type="match status" value="1"/>
</dbReference>
<dbReference type="PROSITE" id="PS00298">
    <property type="entry name" value="HSP90"/>
    <property type="match status" value="1"/>
</dbReference>
<accession>Q8DFM0</accession>
<evidence type="ECO:0000255" key="1">
    <source>
        <dbReference type="HAMAP-Rule" id="MF_00505"/>
    </source>
</evidence>
<comment type="function">
    <text evidence="1">Molecular chaperone. Has ATPase activity.</text>
</comment>
<comment type="subunit">
    <text evidence="1">Homodimer.</text>
</comment>
<comment type="subcellular location">
    <subcellularLocation>
        <location evidence="1">Cytoplasm</location>
    </subcellularLocation>
</comment>
<comment type="similarity">
    <text evidence="1">Belongs to the heat shock protein 90 family.</text>
</comment>
<organism>
    <name type="scientific">Vibrio vulnificus (strain CMCP6)</name>
    <dbReference type="NCBI Taxonomy" id="216895"/>
    <lineage>
        <taxon>Bacteria</taxon>
        <taxon>Pseudomonadati</taxon>
        <taxon>Pseudomonadota</taxon>
        <taxon>Gammaproteobacteria</taxon>
        <taxon>Vibrionales</taxon>
        <taxon>Vibrionaceae</taxon>
        <taxon>Vibrio</taxon>
    </lineage>
</organism>
<proteinExistence type="inferred from homology"/>
<sequence>MNETVANNKETRGFQSEVKQLLHLMIHSLYSNKEIFLRELISNASDAADKLRFQALSNPALYENDAELGVKLSFNEEHNTLTISDNGIGMSREEVISHLGTIAKSGTAEFFSKLSQEQSKDSQLIGQFGVGFYSAFIVADAVTVRTRAAGLSADQAVLWHSAGEGEYTVEDITKESRGTDIILHMREDGKEFLNEWRLRDVIGKYSDHIGIPVSIQTRVRDEEGKETEEVKWEQINKAQALWTRNKSDISDEEYQEFYKHVSHDFADPLLWSHNRVEGKNDYTSLLYIPSKAPWDMMNRDHKSGLKLYVQRVFIMDDAEQFMPSYLRFVRGLIDSNDLPLNVSREILQDNKVTQSLRGACTKRVLTMLERLAKNDTDKYQTFWKEFGLVMKEGPAEDYANREKVASLLRFASTEVDSAEQTVSLESYVERMKEGQDKIYYLTADSYAAAKNSPHLEQFKAKGLEVILMFDRIDEWLMNYLTEFDGKQFQSITKAGLDLSQFEDEQEKEKQKETEQEFQSVVERTKSYLGDRVKEVRTTFKLANTPAVVVTDDFEMGTQMAKLLAAAGQAVPEVKYIFEINPNHTLVKQMADETDEEAFGRWVEVLLGQAMLAERGSMEDPSQFLTAINSLLTKG</sequence>
<keyword id="KW-0067">ATP-binding</keyword>
<keyword id="KW-0143">Chaperone</keyword>
<keyword id="KW-0963">Cytoplasm</keyword>
<keyword id="KW-0547">Nucleotide-binding</keyword>
<keyword id="KW-0346">Stress response</keyword>
<feature type="chain" id="PRO_0000063022" description="Chaperone protein HtpG">
    <location>
        <begin position="1"/>
        <end position="634"/>
    </location>
</feature>
<feature type="region of interest" description="A; substrate-binding" evidence="1">
    <location>
        <begin position="1"/>
        <end position="344"/>
    </location>
</feature>
<feature type="region of interest" description="B" evidence="1">
    <location>
        <begin position="345"/>
        <end position="561"/>
    </location>
</feature>
<feature type="region of interest" description="C" evidence="1">
    <location>
        <begin position="562"/>
        <end position="634"/>
    </location>
</feature>
<reference key="1">
    <citation type="submission" date="2002-12" db="EMBL/GenBank/DDBJ databases">
        <title>Complete genome sequence of Vibrio vulnificus CMCP6.</title>
        <authorList>
            <person name="Rhee J.H."/>
            <person name="Kim S.Y."/>
            <person name="Chung S.S."/>
            <person name="Kim J.J."/>
            <person name="Moon Y.H."/>
            <person name="Jeong H."/>
            <person name="Choy H.E."/>
        </authorList>
    </citation>
    <scope>NUCLEOTIDE SEQUENCE [LARGE SCALE GENOMIC DNA]</scope>
    <source>
        <strain>CMCP6</strain>
    </source>
</reference>
<name>HTPG_VIBVU</name>
<protein>
    <recommendedName>
        <fullName evidence="1">Chaperone protein HtpG</fullName>
    </recommendedName>
    <alternativeName>
        <fullName evidence="1">Heat shock protein HtpG</fullName>
    </alternativeName>
    <alternativeName>
        <fullName evidence="1">High temperature protein G</fullName>
    </alternativeName>
</protein>